<evidence type="ECO:0000255" key="1">
    <source>
        <dbReference type="PROSITE-ProRule" id="PRU00108"/>
    </source>
</evidence>
<evidence type="ECO:0000256" key="2">
    <source>
        <dbReference type="SAM" id="MobiDB-lite"/>
    </source>
</evidence>
<dbReference type="EMBL" id="FO080880">
    <property type="protein sequence ID" value="CCD67466.1"/>
    <property type="molecule type" value="Genomic_DNA"/>
</dbReference>
<dbReference type="EMBL" id="X52810">
    <property type="protein sequence ID" value="CAB57215.1"/>
    <property type="status" value="ALT_SEQ"/>
    <property type="molecule type" value="Genomic_DNA"/>
</dbReference>
<dbReference type="PIR" id="S13128">
    <property type="entry name" value="S13128"/>
</dbReference>
<dbReference type="PIR" id="T16081">
    <property type="entry name" value="T16081"/>
</dbReference>
<dbReference type="PIR" id="T37298">
    <property type="entry name" value="T37298"/>
</dbReference>
<dbReference type="RefSeq" id="NP_508796.2">
    <property type="nucleotide sequence ID" value="NM_076395.4"/>
</dbReference>
<dbReference type="SMR" id="P53547"/>
<dbReference type="BioGRID" id="56116">
    <property type="interactions" value="4"/>
</dbReference>
<dbReference type="FunCoup" id="P53547">
    <property type="interactions" value="319"/>
</dbReference>
<dbReference type="IntAct" id="P53547">
    <property type="interactions" value="4"/>
</dbReference>
<dbReference type="STRING" id="6239.F16H11.4.1"/>
<dbReference type="PaxDb" id="6239-F16H11.4"/>
<dbReference type="EnsemblMetazoa" id="F16H11.4.1">
    <property type="protein sequence ID" value="F16H11.4.1"/>
    <property type="gene ID" value="WBGene00000428"/>
</dbReference>
<dbReference type="GeneID" id="191614"/>
<dbReference type="KEGG" id="cel:CELE_F16H11.4"/>
<dbReference type="UCSC" id="F16H11.4">
    <property type="organism name" value="c. elegans"/>
</dbReference>
<dbReference type="AGR" id="WB:WBGene00000428"/>
<dbReference type="CTD" id="191614"/>
<dbReference type="WormBase" id="F16H11.4">
    <property type="protein sequence ID" value="CE50450"/>
    <property type="gene ID" value="WBGene00000428"/>
    <property type="gene designation" value="ceh-1"/>
</dbReference>
<dbReference type="eggNOG" id="KOG0488">
    <property type="taxonomic scope" value="Eukaryota"/>
</dbReference>
<dbReference type="GeneTree" id="ENSGT00940000172282"/>
<dbReference type="HOGENOM" id="CLU_134006_0_0_1"/>
<dbReference type="InParanoid" id="P53547"/>
<dbReference type="OrthoDB" id="6159439at2759"/>
<dbReference type="PhylomeDB" id="P53547"/>
<dbReference type="SignaLink" id="P53547"/>
<dbReference type="Proteomes" id="UP000001940">
    <property type="component" value="Chromosome X"/>
</dbReference>
<dbReference type="Bgee" id="WBGene00000428">
    <property type="expression patterns" value="Expressed in pharyngeal muscle cell (C elegans) and 2 other cell types or tissues"/>
</dbReference>
<dbReference type="GO" id="GO:0005634">
    <property type="term" value="C:nucleus"/>
    <property type="evidence" value="ECO:0007669"/>
    <property type="project" value="UniProtKB-SubCell"/>
</dbReference>
<dbReference type="GO" id="GO:0003677">
    <property type="term" value="F:DNA binding"/>
    <property type="evidence" value="ECO:0007669"/>
    <property type="project" value="UniProtKB-KW"/>
</dbReference>
<dbReference type="GO" id="GO:0000981">
    <property type="term" value="F:DNA-binding transcription factor activity, RNA polymerase II-specific"/>
    <property type="evidence" value="ECO:0007669"/>
    <property type="project" value="InterPro"/>
</dbReference>
<dbReference type="CDD" id="cd00086">
    <property type="entry name" value="homeodomain"/>
    <property type="match status" value="1"/>
</dbReference>
<dbReference type="Gene3D" id="1.10.10.60">
    <property type="entry name" value="Homeodomain-like"/>
    <property type="match status" value="1"/>
</dbReference>
<dbReference type="InterPro" id="IPR001356">
    <property type="entry name" value="HD"/>
</dbReference>
<dbReference type="InterPro" id="IPR020479">
    <property type="entry name" value="HD_metazoa"/>
</dbReference>
<dbReference type="InterPro" id="IPR017970">
    <property type="entry name" value="Homeobox_CS"/>
</dbReference>
<dbReference type="InterPro" id="IPR050394">
    <property type="entry name" value="Homeobox_NK-like"/>
</dbReference>
<dbReference type="InterPro" id="IPR009057">
    <property type="entry name" value="Homeodomain-like_sf"/>
</dbReference>
<dbReference type="PANTHER" id="PTHR24340">
    <property type="entry name" value="HOMEOBOX PROTEIN NKX"/>
    <property type="match status" value="1"/>
</dbReference>
<dbReference type="PANTHER" id="PTHR24340:SF37">
    <property type="entry name" value="HOMEOBOX PROTEIN SLOU"/>
    <property type="match status" value="1"/>
</dbReference>
<dbReference type="Pfam" id="PF00046">
    <property type="entry name" value="Homeodomain"/>
    <property type="match status" value="1"/>
</dbReference>
<dbReference type="PRINTS" id="PR00024">
    <property type="entry name" value="HOMEOBOX"/>
</dbReference>
<dbReference type="SMART" id="SM00389">
    <property type="entry name" value="HOX"/>
    <property type="match status" value="1"/>
</dbReference>
<dbReference type="SUPFAM" id="SSF46689">
    <property type="entry name" value="Homeodomain-like"/>
    <property type="match status" value="1"/>
</dbReference>
<dbReference type="PROSITE" id="PS00027">
    <property type="entry name" value="HOMEOBOX_1"/>
    <property type="match status" value="1"/>
</dbReference>
<dbReference type="PROSITE" id="PS50071">
    <property type="entry name" value="HOMEOBOX_2"/>
    <property type="match status" value="1"/>
</dbReference>
<proteinExistence type="inferred from homology"/>
<name>HM01_CAEEL</name>
<protein>
    <recommendedName>
        <fullName>Homeobox protein ceh-1</fullName>
    </recommendedName>
</protein>
<accession>P53547</accession>
<gene>
    <name type="primary">ceh-1</name>
    <name type="ORF">F16H11.4</name>
</gene>
<comment type="subcellular location">
    <subcellularLocation>
        <location evidence="1">Nucleus</location>
    </subcellularLocation>
</comment>
<organism>
    <name type="scientific">Caenorhabditis elegans</name>
    <dbReference type="NCBI Taxonomy" id="6239"/>
    <lineage>
        <taxon>Eukaryota</taxon>
        <taxon>Metazoa</taxon>
        <taxon>Ecdysozoa</taxon>
        <taxon>Nematoda</taxon>
        <taxon>Chromadorea</taxon>
        <taxon>Rhabditida</taxon>
        <taxon>Rhabditina</taxon>
        <taxon>Rhabditomorpha</taxon>
        <taxon>Rhabditoidea</taxon>
        <taxon>Rhabditidae</taxon>
        <taxon>Peloderinae</taxon>
        <taxon>Caenorhabditis</taxon>
    </lineage>
</organism>
<feature type="chain" id="PRO_0000048981" description="Homeobox protein ceh-1">
    <location>
        <begin position="1" status="less than"/>
        <end position="132"/>
    </location>
</feature>
<feature type="DNA-binding region" description="Homeobox" evidence="1">
    <location>
        <begin position="1"/>
        <end position="60"/>
    </location>
</feature>
<feature type="region of interest" description="Disordered" evidence="2">
    <location>
        <begin position="56"/>
        <end position="80"/>
    </location>
</feature>
<feature type="compositionally biased region" description="Polar residues" evidence="2">
    <location>
        <begin position="63"/>
        <end position="80"/>
    </location>
</feature>
<feature type="non-terminal residue">
    <location>
        <position position="1"/>
    </location>
</feature>
<keyword id="KW-0217">Developmental protein</keyword>
<keyword id="KW-0238">DNA-binding</keyword>
<keyword id="KW-0371">Homeobox</keyword>
<keyword id="KW-0539">Nucleus</keyword>
<keyword id="KW-1185">Reference proteome</keyword>
<sequence length="132" mass="14929">MRRARTAFTYEQLVALENKFKTSRYLSVVERLNLAIQLQLSETQVKIWFQNRRTKWKKHNPGQDANTPQTPPSSDETQIQPILPANPITSFSSLLLPPIISPANSAVLQGTSIPLTLFNLNQILMPQNVGFN</sequence>
<reference key="1">
    <citation type="journal article" date="1998" name="Science">
        <title>Genome sequence of the nematode C. elegans: a platform for investigating biology.</title>
        <authorList>
            <consortium name="The C. elegans sequencing consortium"/>
        </authorList>
    </citation>
    <scope>NUCLEOTIDE SEQUENCE [LARGE SCALE GENOMIC DNA]</scope>
    <source>
        <strain>Bristol N2</strain>
    </source>
</reference>
<reference key="2">
    <citation type="journal article" date="1990" name="Nucleic Acids Res.">
        <title>Homeobox containing genes in the nematode Caenorhabditis elegans.</title>
        <authorList>
            <person name="Hawkins N.C."/>
            <person name="McGhee J.D."/>
        </authorList>
    </citation>
    <scope>NUCLEOTIDE SEQUENCE [GENOMIC DNA] OF 1-60</scope>
</reference>